<evidence type="ECO:0000250" key="1"/>
<evidence type="ECO:0000255" key="2">
    <source>
        <dbReference type="PROSITE-ProRule" id="PRU01007"/>
    </source>
</evidence>
<evidence type="ECO:0000255" key="3">
    <source>
        <dbReference type="PROSITE-ProRule" id="PRU01175"/>
    </source>
</evidence>
<evidence type="ECO:0000255" key="4">
    <source>
        <dbReference type="PROSITE-ProRule" id="PRU01228"/>
    </source>
</evidence>
<evidence type="ECO:0000256" key="5">
    <source>
        <dbReference type="SAM" id="MobiDB-lite"/>
    </source>
</evidence>
<evidence type="ECO:0000305" key="6"/>
<feature type="chain" id="PRO_0000322562" description="GTP pyrophosphokinase rsh">
    <location>
        <begin position="1"/>
        <end position="750"/>
    </location>
</feature>
<feature type="domain" description="HD" evidence="3">
    <location>
        <begin position="45"/>
        <end position="144"/>
    </location>
</feature>
<feature type="domain" description="TGS" evidence="4">
    <location>
        <begin position="390"/>
        <end position="451"/>
    </location>
</feature>
<feature type="domain" description="ACT" evidence="2">
    <location>
        <begin position="676"/>
        <end position="750"/>
    </location>
</feature>
<feature type="region of interest" description="Disordered" evidence="5">
    <location>
        <begin position="587"/>
        <end position="613"/>
    </location>
</feature>
<accession>Q2YN11</accession>
<organism>
    <name type="scientific">Brucella abortus (strain 2308)</name>
    <dbReference type="NCBI Taxonomy" id="359391"/>
    <lineage>
        <taxon>Bacteria</taxon>
        <taxon>Pseudomonadati</taxon>
        <taxon>Pseudomonadota</taxon>
        <taxon>Alphaproteobacteria</taxon>
        <taxon>Hyphomicrobiales</taxon>
        <taxon>Brucellaceae</taxon>
        <taxon>Brucella/Ochrobactrum group</taxon>
        <taxon>Brucella</taxon>
    </lineage>
</organism>
<keyword id="KW-0067">ATP-binding</keyword>
<keyword id="KW-0342">GTP-binding</keyword>
<keyword id="KW-0418">Kinase</keyword>
<keyword id="KW-0547">Nucleotide-binding</keyword>
<keyword id="KW-1185">Reference proteome</keyword>
<keyword id="KW-0808">Transferase</keyword>
<proteinExistence type="inferred from homology"/>
<comment type="function">
    <text evidence="1">Functions as a (p)ppGpp synthase. In eubacteria ppGpp (guanosine 3'-diphosphate 5'-diphosphate) is a mediator of the stringent response that coordinates a variety of cellular activities in response to changes in nutritional abundance. Plays a role in adaptation of Brucella to its intracellular host environment (By similarity).</text>
</comment>
<comment type="catalytic activity">
    <reaction>
        <text>GTP + ATP = guanosine 3'-diphosphate 5'-triphosphate + AMP</text>
        <dbReference type="Rhea" id="RHEA:22088"/>
        <dbReference type="ChEBI" id="CHEBI:30616"/>
        <dbReference type="ChEBI" id="CHEBI:37565"/>
        <dbReference type="ChEBI" id="CHEBI:142410"/>
        <dbReference type="ChEBI" id="CHEBI:456215"/>
        <dbReference type="EC" id="2.7.6.5"/>
    </reaction>
</comment>
<comment type="similarity">
    <text evidence="6">Belongs to the RelA/SpoT family.</text>
</comment>
<dbReference type="EC" id="2.7.6.5"/>
<dbReference type="EMBL" id="AM040264">
    <property type="protein sequence ID" value="CAJ10628.1"/>
    <property type="molecule type" value="Genomic_DNA"/>
</dbReference>
<dbReference type="RefSeq" id="WP_002963796.1">
    <property type="nucleotide sequence ID" value="NZ_KN046823.1"/>
</dbReference>
<dbReference type="SMR" id="Q2YN11"/>
<dbReference type="STRING" id="359391.BAB1_0672"/>
<dbReference type="KEGG" id="bmf:BAB1_0672"/>
<dbReference type="PATRIC" id="fig|359391.11.peg.2986"/>
<dbReference type="HOGENOM" id="CLU_012300_3_0_5"/>
<dbReference type="PhylomeDB" id="Q2YN11"/>
<dbReference type="Proteomes" id="UP000002719">
    <property type="component" value="Chromosome I"/>
</dbReference>
<dbReference type="GO" id="GO:0005886">
    <property type="term" value="C:plasma membrane"/>
    <property type="evidence" value="ECO:0007669"/>
    <property type="project" value="TreeGrafter"/>
</dbReference>
<dbReference type="GO" id="GO:0005524">
    <property type="term" value="F:ATP binding"/>
    <property type="evidence" value="ECO:0007669"/>
    <property type="project" value="UniProtKB-KW"/>
</dbReference>
<dbReference type="GO" id="GO:0005525">
    <property type="term" value="F:GTP binding"/>
    <property type="evidence" value="ECO:0007669"/>
    <property type="project" value="UniProtKB-KW"/>
</dbReference>
<dbReference type="GO" id="GO:0008728">
    <property type="term" value="F:GTP diphosphokinase activity"/>
    <property type="evidence" value="ECO:0007669"/>
    <property type="project" value="UniProtKB-EC"/>
</dbReference>
<dbReference type="GO" id="GO:0008893">
    <property type="term" value="F:guanosine-3',5'-bis(diphosphate) 3'-diphosphatase activity"/>
    <property type="evidence" value="ECO:0007669"/>
    <property type="project" value="TreeGrafter"/>
</dbReference>
<dbReference type="GO" id="GO:0016301">
    <property type="term" value="F:kinase activity"/>
    <property type="evidence" value="ECO:0007669"/>
    <property type="project" value="UniProtKB-KW"/>
</dbReference>
<dbReference type="GO" id="GO:0015969">
    <property type="term" value="P:guanosine tetraphosphate metabolic process"/>
    <property type="evidence" value="ECO:0007669"/>
    <property type="project" value="InterPro"/>
</dbReference>
<dbReference type="GO" id="GO:0042594">
    <property type="term" value="P:response to starvation"/>
    <property type="evidence" value="ECO:0007669"/>
    <property type="project" value="TreeGrafter"/>
</dbReference>
<dbReference type="CDD" id="cd04876">
    <property type="entry name" value="ACT_RelA-SpoT"/>
    <property type="match status" value="1"/>
</dbReference>
<dbReference type="CDD" id="cd00077">
    <property type="entry name" value="HDc"/>
    <property type="match status" value="1"/>
</dbReference>
<dbReference type="CDD" id="cd05399">
    <property type="entry name" value="NT_Rel-Spo_like"/>
    <property type="match status" value="1"/>
</dbReference>
<dbReference type="CDD" id="cd01668">
    <property type="entry name" value="TGS_RSH"/>
    <property type="match status" value="1"/>
</dbReference>
<dbReference type="FunFam" id="3.10.20.30:FF:000002">
    <property type="entry name" value="GTP pyrophosphokinase (RelA/SpoT)"/>
    <property type="match status" value="1"/>
</dbReference>
<dbReference type="FunFam" id="1.10.3210.10:FF:000001">
    <property type="entry name" value="GTP pyrophosphokinase RelA"/>
    <property type="match status" value="1"/>
</dbReference>
<dbReference type="FunFam" id="3.30.460.10:FF:000001">
    <property type="entry name" value="GTP pyrophosphokinase RelA"/>
    <property type="match status" value="1"/>
</dbReference>
<dbReference type="Gene3D" id="3.10.20.30">
    <property type="match status" value="1"/>
</dbReference>
<dbReference type="Gene3D" id="3.30.70.260">
    <property type="match status" value="1"/>
</dbReference>
<dbReference type="Gene3D" id="3.30.460.10">
    <property type="entry name" value="Beta Polymerase, domain 2"/>
    <property type="match status" value="1"/>
</dbReference>
<dbReference type="Gene3D" id="1.10.3210.10">
    <property type="entry name" value="Hypothetical protein af1432"/>
    <property type="match status" value="1"/>
</dbReference>
<dbReference type="InterPro" id="IPR045865">
    <property type="entry name" value="ACT-like_dom_sf"/>
</dbReference>
<dbReference type="InterPro" id="IPR002912">
    <property type="entry name" value="ACT_dom"/>
</dbReference>
<dbReference type="InterPro" id="IPR012675">
    <property type="entry name" value="Beta-grasp_dom_sf"/>
</dbReference>
<dbReference type="InterPro" id="IPR003607">
    <property type="entry name" value="HD/PDEase_dom"/>
</dbReference>
<dbReference type="InterPro" id="IPR006674">
    <property type="entry name" value="HD_domain"/>
</dbReference>
<dbReference type="InterPro" id="IPR043519">
    <property type="entry name" value="NT_sf"/>
</dbReference>
<dbReference type="InterPro" id="IPR004811">
    <property type="entry name" value="RelA/Spo_fam"/>
</dbReference>
<dbReference type="InterPro" id="IPR045600">
    <property type="entry name" value="RelA/SpoT_AH_RIS"/>
</dbReference>
<dbReference type="InterPro" id="IPR007685">
    <property type="entry name" value="RelA_SpoT"/>
</dbReference>
<dbReference type="InterPro" id="IPR004095">
    <property type="entry name" value="TGS"/>
</dbReference>
<dbReference type="InterPro" id="IPR012676">
    <property type="entry name" value="TGS-like"/>
</dbReference>
<dbReference type="InterPro" id="IPR033655">
    <property type="entry name" value="TGS_RelA/SpoT"/>
</dbReference>
<dbReference type="NCBIfam" id="TIGR00691">
    <property type="entry name" value="spoT_relA"/>
    <property type="match status" value="1"/>
</dbReference>
<dbReference type="PANTHER" id="PTHR21262:SF36">
    <property type="entry name" value="BIFUNCTIONAL (P)PPGPP SYNTHASE_HYDROLASE SPOT"/>
    <property type="match status" value="1"/>
</dbReference>
<dbReference type="PANTHER" id="PTHR21262">
    <property type="entry name" value="GUANOSINE-3',5'-BIS DIPHOSPHATE 3'-PYROPHOSPHOHYDROLASE"/>
    <property type="match status" value="1"/>
</dbReference>
<dbReference type="Pfam" id="PF13291">
    <property type="entry name" value="ACT_4"/>
    <property type="match status" value="1"/>
</dbReference>
<dbReference type="Pfam" id="PF13328">
    <property type="entry name" value="HD_4"/>
    <property type="match status" value="1"/>
</dbReference>
<dbReference type="Pfam" id="PF19296">
    <property type="entry name" value="RelA_AH_RIS"/>
    <property type="match status" value="1"/>
</dbReference>
<dbReference type="Pfam" id="PF04607">
    <property type="entry name" value="RelA_SpoT"/>
    <property type="match status" value="1"/>
</dbReference>
<dbReference type="Pfam" id="PF02824">
    <property type="entry name" value="TGS"/>
    <property type="match status" value="1"/>
</dbReference>
<dbReference type="SMART" id="SM00471">
    <property type="entry name" value="HDc"/>
    <property type="match status" value="1"/>
</dbReference>
<dbReference type="SMART" id="SM00954">
    <property type="entry name" value="RelA_SpoT"/>
    <property type="match status" value="1"/>
</dbReference>
<dbReference type="SUPFAM" id="SSF55021">
    <property type="entry name" value="ACT-like"/>
    <property type="match status" value="1"/>
</dbReference>
<dbReference type="SUPFAM" id="SSF109604">
    <property type="entry name" value="HD-domain/PDEase-like"/>
    <property type="match status" value="1"/>
</dbReference>
<dbReference type="SUPFAM" id="SSF81301">
    <property type="entry name" value="Nucleotidyltransferase"/>
    <property type="match status" value="1"/>
</dbReference>
<dbReference type="SUPFAM" id="SSF81271">
    <property type="entry name" value="TGS-like"/>
    <property type="match status" value="1"/>
</dbReference>
<dbReference type="PROSITE" id="PS51671">
    <property type="entry name" value="ACT"/>
    <property type="match status" value="1"/>
</dbReference>
<dbReference type="PROSITE" id="PS51831">
    <property type="entry name" value="HD"/>
    <property type="match status" value="1"/>
</dbReference>
<dbReference type="PROSITE" id="PS51880">
    <property type="entry name" value="TGS"/>
    <property type="match status" value="1"/>
</dbReference>
<reference key="1">
    <citation type="journal article" date="2005" name="Infect. Immun.">
        <title>Whole-genome analyses of speciation events in pathogenic Brucellae.</title>
        <authorList>
            <person name="Chain P.S."/>
            <person name="Comerci D.J."/>
            <person name="Tolmasky M.E."/>
            <person name="Larimer F.W."/>
            <person name="Malfatti S.A."/>
            <person name="Vergez L.M."/>
            <person name="Aguero F."/>
            <person name="Land M.L."/>
            <person name="Ugalde R.A."/>
            <person name="Garcia E."/>
        </authorList>
    </citation>
    <scope>NUCLEOTIDE SEQUENCE [LARGE SCALE GENOMIC DNA]</scope>
    <source>
        <strain>2308</strain>
    </source>
</reference>
<name>RSH_BRUA2</name>
<sequence>MMRQYELVERVQRYKPDVNEALLNKAYVYAMQKHGSQKRASGDPYFSHPLEVAAILTDMHLDEATIAIALLHDTIEDTTATRQEIDQLFGPEIGKLVEGLTKLKKLDLVSKKAVQAENLRKLLLAISEDVRVLLVKLADRLHNMRTLGVMREDKRLRIAEETMDIYAPLAGRMGMQDMREELEELAFRYINPDAWRAVTDRLAELLEKNRGLLQKIETDLSEIFEKNGIKASVKSRQKKPWSVFRKMETKGLSFEQLSDIFGFRVMVDTVQDCYRALGLIHTTWSMVPGRFKDYISTPKQNDYRSIHTTIIGPSRQRIELQIRTREMDEIAEFGVAAHSIYKDRGSANNPHKISTETNAYAWLRQTIEQLSEGDNPEEFLEHTKLELFQDQVFCFTPKGRLIALPRGATPIDFAYAVHTDIGDSCVGAKVNGRIMPLMTELKNGDEVDIIRSKAQVPPAAWESLVATGKARAAIRRATRSAVRKQYSGLGMRILERAFERAGKPFSKDILKPGLPRLARKDVEDVLAAVGRGELPSADVVKAVYPDYQDTRVTTQNNPAKAGEKGWFNIQNAAGMIFKVPEGGEGAAAKVDPAATTPKPGKRALPIRGTNPDLPVRFAPEGAVPGDRIVGILQPGAGITIYPIQSPALTAYDDQPERWIDVRWDIDDQMSERFPARISVSAINSPGSLAEIAQIAAANDANIHNLSMARTAPDFTEMIIDVEVWDLKHLNRIISQLKESASVSSAKRVNG</sequence>
<protein>
    <recommendedName>
        <fullName>GTP pyrophosphokinase rsh</fullName>
        <ecNumber>2.7.6.5</ecNumber>
    </recommendedName>
    <alternativeName>
        <fullName>(p)ppGpp synthase</fullName>
    </alternativeName>
    <alternativeName>
        <fullName>ATP:GTP 3'-pyrophosphotransferase</fullName>
    </alternativeName>
</protein>
<gene>
    <name type="primary">rsh</name>
    <name type="ordered locus">BAB1_0672</name>
</gene>